<proteinExistence type="evidence at protein level"/>
<evidence type="ECO:0000269" key="1">
    <source>
    </source>
</evidence>
<evidence type="ECO:0000269" key="2">
    <source>
    </source>
</evidence>
<evidence type="ECO:0000269" key="3">
    <source>
    </source>
</evidence>
<evidence type="ECO:0000305" key="4"/>
<evidence type="ECO:0007829" key="5">
    <source>
        <dbReference type="PDB" id="2A2U"/>
    </source>
</evidence>
<reference key="1">
    <citation type="journal article" date="1987" name="Biochim. Biophys. Acta">
        <title>Length polymorphism in the 3' noncoding region of rat hepatic alpha 2u-globulin mRNAs.</title>
        <authorList>
            <person name="Ichiyoshi Y."/>
            <person name="Endo H."/>
            <person name="Yamamoto M."/>
        </authorList>
    </citation>
    <scope>NUCLEOTIDE SEQUENCE [MRNA]</scope>
</reference>
<reference key="2">
    <citation type="submission" date="1995-07" db="EMBL/GenBank/DDBJ databases">
        <authorList>
            <person name="Kurtz D.T."/>
            <person name="Dey M."/>
        </authorList>
    </citation>
    <scope>NUCLEOTIDE SEQUENCE [MRNA]</scope>
    <source>
        <strain>Sprague-Dawley</strain>
    </source>
</reference>
<reference key="3">
    <citation type="journal article" date="2000" name="Biochem. Biophys. Res. Commun.">
        <title>Molecular evidence of complex tissue- and sex-specific mRNA expression of the rat alpha(2u)-globulin multigene family.</title>
        <authorList>
            <person name="Saito K."/>
            <person name="Nishikawa J."/>
            <person name="Imagawa M."/>
            <person name="Nishihara T."/>
            <person name="Matsuo M."/>
        </authorList>
    </citation>
    <scope>NUCLEOTIDE SEQUENCE [MRNA]</scope>
    <source>
        <strain>Sprague-Dawley</strain>
        <tissue>Preputial gland</tissue>
    </source>
</reference>
<reference key="4">
    <citation type="journal article" date="2004" name="Genome Res.">
        <title>The status, quality, and expansion of the NIH full-length cDNA project: the Mammalian Gene Collection (MGC).</title>
        <authorList>
            <consortium name="The MGC Project Team"/>
        </authorList>
    </citation>
    <scope>NUCLEOTIDE SEQUENCE [LARGE SCALE MRNA]</scope>
    <source>
        <tissue>Liver</tissue>
        <tissue>Spleen</tissue>
    </source>
</reference>
<reference key="5">
    <citation type="journal article" date="1981" name="Proc. Natl. Acad. Sci. U.S.A.">
        <title>Cloning and sequence of several alpha 2u-globulin cDNAs.</title>
        <authorList>
            <person name="Unterman R.D."/>
            <person name="Lynch K.R."/>
            <person name="Nakhasi H.L."/>
            <person name="Dolan K.P."/>
            <person name="Hamilton J.W."/>
            <person name="Cohn D.V."/>
            <person name="Feigelson P."/>
        </authorList>
    </citation>
    <scope>NUCLEOTIDE SEQUENCE [MRNA] OF 5-181</scope>
</reference>
<reference key="6">
    <citation type="journal article" date="1982" name="J. Biol. Chem.">
        <title>The structure and expression of very closely related members of the alpha 2u globulin gene family.</title>
        <authorList>
            <person name="Dolan K.P."/>
            <person name="Unterman R.D."/>
            <person name="McLaughlin M."/>
            <person name="Nakhasi H.L."/>
            <person name="Lynch K.R."/>
            <person name="Feigelson P."/>
        </authorList>
    </citation>
    <scope>NUCLEOTIDE SEQUENCE [MRNA] OF 34-181</scope>
</reference>
<reference key="7">
    <citation type="journal article" date="1981" name="J. Biol. Chem.">
        <title>Amino acid sequence of the precursor of rat liver alpha 2 micro-globulin.</title>
        <authorList>
            <person name="Drickamer K."/>
            <person name="Kwoh T.J."/>
            <person name="Kurtz D.T."/>
        </authorList>
    </citation>
    <scope>NUCLEOTIDE SEQUENCE [MRNA] OF 1-65</scope>
</reference>
<reference key="8">
    <citation type="journal article" date="1989" name="FEBS Lett.">
        <title>Kidney fatty acid-binding protein: identification as alpha 2U-globulin.</title>
        <authorList>
            <person name="Kimura H."/>
            <person name="Odani S."/>
            <person name="Suzuki J."/>
            <person name="Arakawa M."/>
            <person name="Ono T."/>
        </authorList>
    </citation>
    <scope>PROTEIN SEQUENCE OF 29-48</scope>
    <source>
        <tissue>Kidney</tissue>
    </source>
</reference>
<reference key="9">
    <citation type="journal article" date="1991" name="J. Biol. Chem.">
        <title>Primary structure and cellular distribution of two fatty acid-binding proteins in adult rat kidneys.</title>
        <authorList>
            <person name="Kimura H."/>
            <person name="Odani S."/>
            <person name="Nishi S."/>
            <person name="Sato H."/>
            <person name="Arakawa M."/>
            <person name="Ono T."/>
        </authorList>
    </citation>
    <scope>PROTEIN SEQUENCE OF 29-179</scope>
    <scope>DISULFIDE BOND</scope>
    <source>
        <tissue>Kidney</tissue>
    </source>
</reference>
<reference key="10">
    <citation type="journal article" date="1996" name="Biochim. Biophys. Acta">
        <title>Purification and identification of allergenic alpha (2u)-globulin species of rat urine.</title>
        <authorList>
            <person name="Bayard C."/>
            <person name="Holmquist L."/>
            <person name="Vesterberg O."/>
        </authorList>
    </citation>
    <scope>PROTEIN SEQUENCE OF 20-44</scope>
    <scope>ALLERGEN</scope>
    <source>
        <tissue>Urine</tissue>
    </source>
</reference>
<reference key="11">
    <citation type="journal article" date="1996" name="Biochim. Biophys. Acta">
        <authorList>
            <person name="Bayard C."/>
            <person name="Holmquist L."/>
            <person name="Vesterberg O."/>
        </authorList>
    </citation>
    <scope>ERRATUM OF PUBMED:8645715</scope>
</reference>
<reference key="12">
    <citation type="journal article" date="1992" name="Nature">
        <title>Pheromone binding to two rodent urinary proteins revealed by X-ray crystallography.</title>
        <authorList>
            <person name="Boecksel Z."/>
            <person name="Groom C.R."/>
            <person name="Flower D.R."/>
            <person name="Wright C.E."/>
            <person name="Phillips S.E.V."/>
            <person name="Cavaggioni A."/>
            <person name="Findlay J.B.C."/>
            <person name="North A.C.T."/>
        </authorList>
    </citation>
    <scope>X-RAY CRYSTALLOGRAPHY (2.8 ANGSTROMS)</scope>
</reference>
<sequence>MKLLLLLLCLGLTLVCGHAEEASSTRGNLDVAKLNGDWFSIVVASNKREKIEENGSMRVFMQHIDVLENSLGFKFRIKENGECRELYLVAYKTPEDGEYFVEYDGGNTFTILKTDYDRYVMFHLINFKNGETFQLMVLYGRTKDLSSDIKEKFAKLCEAHGITRDNIIDLTKTDRCLQARG</sequence>
<comment type="function">
    <text>Major urinary proteins (Mups) bind and release pheromones. They may also protect pheromones from oxidation. In this context, they play a role in the regulation of social behaviors, such as aggression, mating, pup-suckling, territory establishment and dominance. Acts as a kairomone, detected by the prey vomeronasal organ and inducing fear reactions in mice.</text>
</comment>
<comment type="subcellular location">
    <molecule>15.5 kDa fatty acid-binding protein</molecule>
    <subcellularLocation>
        <location>Cytoplasm</location>
        <location>Cytosol</location>
    </subcellularLocation>
    <text>It is probably taken up from the urinary lumen by endocytosis.</text>
</comment>
<comment type="subcellular location">
    <subcellularLocation>
        <location>Secreted</location>
    </subcellularLocation>
</comment>
<comment type="tissue specificity">
    <text>Abundant in the urine of adult male rats but absent from that of females.</text>
</comment>
<comment type="induction">
    <text>Synthesis of this protein in the hepatic parenchymal cells is induced in vivo by androgens, glucocorticoids, growth hormone, and insulin, and inhibited by estrogens.</text>
</comment>
<comment type="allergen">
    <text evidence="3">Causes an allergic reaction in human.</text>
</comment>
<comment type="similarity">
    <text evidence="4">Belongs to the calycin superfamily. Lipocalin family.</text>
</comment>
<organism>
    <name type="scientific">Rattus norvegicus</name>
    <name type="common">Rat</name>
    <dbReference type="NCBI Taxonomy" id="10116"/>
    <lineage>
        <taxon>Eukaryota</taxon>
        <taxon>Metazoa</taxon>
        <taxon>Chordata</taxon>
        <taxon>Craniata</taxon>
        <taxon>Vertebrata</taxon>
        <taxon>Euteleostomi</taxon>
        <taxon>Mammalia</taxon>
        <taxon>Eutheria</taxon>
        <taxon>Euarchontoglires</taxon>
        <taxon>Glires</taxon>
        <taxon>Rodentia</taxon>
        <taxon>Myomorpha</taxon>
        <taxon>Muroidea</taxon>
        <taxon>Muridae</taxon>
        <taxon>Murinae</taxon>
        <taxon>Rattus</taxon>
    </lineage>
</organism>
<dbReference type="EMBL" id="M26835">
    <property type="protein sequence ID" value="AAA40643.1"/>
    <property type="molecule type" value="mRNA"/>
</dbReference>
<dbReference type="EMBL" id="M26837">
    <property type="protein sequence ID" value="AAA40641.1"/>
    <property type="molecule type" value="mRNA"/>
</dbReference>
<dbReference type="EMBL" id="AB039822">
    <property type="protein sequence ID" value="BAA96479.1"/>
    <property type="molecule type" value="mRNA"/>
</dbReference>
<dbReference type="EMBL" id="BC088109">
    <property type="protein sequence ID" value="AAH88109.1"/>
    <property type="molecule type" value="mRNA"/>
</dbReference>
<dbReference type="EMBL" id="BC098654">
    <property type="protein sequence ID" value="AAH98654.1"/>
    <property type="molecule type" value="mRNA"/>
</dbReference>
<dbReference type="EMBL" id="BC105816">
    <property type="protein sequence ID" value="AAI05817.1"/>
    <property type="molecule type" value="mRNA"/>
</dbReference>
<dbReference type="EMBL" id="U31287">
    <property type="protein sequence ID" value="AAA75511.1"/>
    <property type="molecule type" value="mRNA"/>
</dbReference>
<dbReference type="EMBL" id="V01220">
    <property type="protein sequence ID" value="CAA24531.1"/>
    <property type="molecule type" value="mRNA"/>
</dbReference>
<dbReference type="EMBL" id="J00737">
    <property type="protein sequence ID" value="AAA41198.1"/>
    <property type="molecule type" value="mRNA"/>
</dbReference>
<dbReference type="PIR" id="A92317">
    <property type="entry name" value="UART"/>
</dbReference>
<dbReference type="RefSeq" id="NP_001003409.2">
    <property type="nucleotide sequence ID" value="NM_001003409.2"/>
</dbReference>
<dbReference type="RefSeq" id="NP_671747.1">
    <property type="nucleotide sequence ID" value="NM_147214.2"/>
</dbReference>
<dbReference type="RefSeq" id="NP_988843.3">
    <property type="nucleotide sequence ID" value="NM_203512.3"/>
</dbReference>
<dbReference type="RefSeq" id="XP_038965407.1">
    <property type="nucleotide sequence ID" value="XM_039109479.2"/>
</dbReference>
<dbReference type="RefSeq" id="XP_038965409.1">
    <property type="nucleotide sequence ID" value="XM_039109481.2"/>
</dbReference>
<dbReference type="PDB" id="2A2G">
    <property type="method" value="X-ray"/>
    <property type="resolution" value="2.90 A"/>
    <property type="chains" value="A/B/C/D=1-181"/>
</dbReference>
<dbReference type="PDB" id="2A2U">
    <property type="method" value="X-ray"/>
    <property type="resolution" value="2.50 A"/>
    <property type="chains" value="A/B/C/D=1-181"/>
</dbReference>
<dbReference type="PDBsum" id="2A2G"/>
<dbReference type="PDBsum" id="2A2U"/>
<dbReference type="SMR" id="P02761"/>
<dbReference type="FunCoup" id="P02761">
    <property type="interactions" value="2"/>
</dbReference>
<dbReference type="STRING" id="10116.ENSRNOP00000068097"/>
<dbReference type="Allergome" id="3464">
    <property type="allergen name" value="Rat n 1.0101"/>
</dbReference>
<dbReference type="Allergome" id="611">
    <property type="allergen name" value="Rat n 1"/>
</dbReference>
<dbReference type="GlyGen" id="P02761">
    <property type="glycosylation" value="1 site"/>
</dbReference>
<dbReference type="PaxDb" id="10116-ENSRNOP00000068097"/>
<dbReference type="Ensembl" id="ENSRNOT00000100434.1">
    <property type="protein sequence ID" value="ENSRNOP00000080129.1"/>
    <property type="gene ID" value="ENSRNOG00000067602.1"/>
</dbReference>
<dbReference type="Ensembl" id="ENSRNOT00000120034.1">
    <property type="protein sequence ID" value="ENSRNOP00000092008.1"/>
    <property type="gene ID" value="ENSRNOG00000067602.1"/>
</dbReference>
<dbReference type="GeneID" id="298109"/>
<dbReference type="KEGG" id="rno:298109"/>
<dbReference type="UCSC" id="RGD:708506">
    <property type="organism name" value="rat"/>
</dbReference>
<dbReference type="AGR" id="RGD:1566134"/>
<dbReference type="CTD" id="298109"/>
<dbReference type="RGD" id="708506">
    <property type="gene designation" value="LOC259246"/>
</dbReference>
<dbReference type="eggNOG" id="ENOG502S6GK">
    <property type="taxonomic scope" value="Eukaryota"/>
</dbReference>
<dbReference type="GeneTree" id="ENSGT01050000244868"/>
<dbReference type="InParanoid" id="P02761"/>
<dbReference type="OrthoDB" id="9048943at2759"/>
<dbReference type="PhylomeDB" id="P02761"/>
<dbReference type="TreeFam" id="TF338197"/>
<dbReference type="EvolutionaryTrace" id="P02761"/>
<dbReference type="PRO" id="PR:P02761"/>
<dbReference type="Proteomes" id="UP000002494">
    <property type="component" value="Chromosome 5"/>
</dbReference>
<dbReference type="GO" id="GO:0005829">
    <property type="term" value="C:cytosol"/>
    <property type="evidence" value="ECO:0000250"/>
    <property type="project" value="UniProtKB"/>
</dbReference>
<dbReference type="GO" id="GO:0005615">
    <property type="term" value="C:extracellular space"/>
    <property type="evidence" value="ECO:0000314"/>
    <property type="project" value="UniProtKB"/>
</dbReference>
<dbReference type="GO" id="GO:0005634">
    <property type="term" value="C:nucleus"/>
    <property type="evidence" value="ECO:0000250"/>
    <property type="project" value="UniProtKB"/>
</dbReference>
<dbReference type="GO" id="GO:0005009">
    <property type="term" value="F:insulin receptor activity"/>
    <property type="evidence" value="ECO:0000250"/>
    <property type="project" value="UniProtKB"/>
</dbReference>
<dbReference type="GO" id="GO:0005549">
    <property type="term" value="F:odorant binding"/>
    <property type="evidence" value="ECO:0000318"/>
    <property type="project" value="GO_Central"/>
</dbReference>
<dbReference type="GO" id="GO:0005550">
    <property type="term" value="F:pheromone binding"/>
    <property type="evidence" value="ECO:0000250"/>
    <property type="project" value="UniProtKB"/>
</dbReference>
<dbReference type="GO" id="GO:0036094">
    <property type="term" value="F:small molecule binding"/>
    <property type="evidence" value="ECO:0007669"/>
    <property type="project" value="InterPro"/>
</dbReference>
<dbReference type="GO" id="GO:0009060">
    <property type="term" value="P:aerobic respiration"/>
    <property type="evidence" value="ECO:0000250"/>
    <property type="project" value="UniProtKB"/>
</dbReference>
<dbReference type="GO" id="GO:0071396">
    <property type="term" value="P:cellular response to lipid"/>
    <property type="evidence" value="ECO:0000250"/>
    <property type="project" value="UniProtKB"/>
</dbReference>
<dbReference type="GO" id="GO:0006112">
    <property type="term" value="P:energy reserve metabolic process"/>
    <property type="evidence" value="ECO:0000250"/>
    <property type="project" value="UniProtKB"/>
</dbReference>
<dbReference type="GO" id="GO:0042593">
    <property type="term" value="P:glucose homeostasis"/>
    <property type="evidence" value="ECO:0000250"/>
    <property type="project" value="UniProtKB"/>
</dbReference>
<dbReference type="GO" id="GO:0031649">
    <property type="term" value="P:heat generation"/>
    <property type="evidence" value="ECO:0000250"/>
    <property type="project" value="UniProtKB"/>
</dbReference>
<dbReference type="GO" id="GO:0045475">
    <property type="term" value="P:locomotor rhythm"/>
    <property type="evidence" value="ECO:0000250"/>
    <property type="project" value="UniProtKB"/>
</dbReference>
<dbReference type="GO" id="GO:0007005">
    <property type="term" value="P:mitochondrion organization"/>
    <property type="evidence" value="ECO:0000250"/>
    <property type="project" value="UniProtKB"/>
</dbReference>
<dbReference type="GO" id="GO:0045892">
    <property type="term" value="P:negative regulation of DNA-templated transcription"/>
    <property type="evidence" value="ECO:0000250"/>
    <property type="project" value="UniProtKB"/>
</dbReference>
<dbReference type="GO" id="GO:0045721">
    <property type="term" value="P:negative regulation of gluconeogenesis"/>
    <property type="evidence" value="ECO:0000250"/>
    <property type="project" value="UniProtKB"/>
</dbReference>
<dbReference type="GO" id="GO:0061179">
    <property type="term" value="P:negative regulation of insulin secretion involved in cellular response to glucose stimulus"/>
    <property type="evidence" value="ECO:0000250"/>
    <property type="project" value="UniProtKB"/>
</dbReference>
<dbReference type="GO" id="GO:0051055">
    <property type="term" value="P:negative regulation of lipid biosynthetic process"/>
    <property type="evidence" value="ECO:0000250"/>
    <property type="project" value="UniProtKB"/>
</dbReference>
<dbReference type="GO" id="GO:0010888">
    <property type="term" value="P:negative regulation of lipid storage"/>
    <property type="evidence" value="ECO:0000250"/>
    <property type="project" value="UniProtKB"/>
</dbReference>
<dbReference type="GO" id="GO:0010628">
    <property type="term" value="P:positive regulation of gene expression"/>
    <property type="evidence" value="ECO:0000250"/>
    <property type="project" value="UniProtKB"/>
</dbReference>
<dbReference type="GO" id="GO:0010907">
    <property type="term" value="P:positive regulation of glucose metabolic process"/>
    <property type="evidence" value="ECO:0000250"/>
    <property type="project" value="UniProtKB"/>
</dbReference>
<dbReference type="GO" id="GO:0045834">
    <property type="term" value="P:positive regulation of lipid metabolic process"/>
    <property type="evidence" value="ECO:0000250"/>
    <property type="project" value="UniProtKB"/>
</dbReference>
<dbReference type="GO" id="GO:0051897">
    <property type="term" value="P:positive regulation of phosphatidylinositol 3-kinase/protein kinase B signal transduction"/>
    <property type="evidence" value="ECO:0000250"/>
    <property type="project" value="UniProtKB"/>
</dbReference>
<dbReference type="CDD" id="cd19428">
    <property type="entry name" value="lipocalin_MUP-like"/>
    <property type="match status" value="1"/>
</dbReference>
<dbReference type="FunFam" id="2.40.128.20:FF:000008">
    <property type="entry name" value="Major urinary protein"/>
    <property type="match status" value="1"/>
</dbReference>
<dbReference type="Gene3D" id="2.40.128.20">
    <property type="match status" value="1"/>
</dbReference>
<dbReference type="InterPro" id="IPR012674">
    <property type="entry name" value="Calycin"/>
</dbReference>
<dbReference type="InterPro" id="IPR002345">
    <property type="entry name" value="Lipocalin"/>
</dbReference>
<dbReference type="InterPro" id="IPR022272">
    <property type="entry name" value="Lipocalin_CS"/>
</dbReference>
<dbReference type="InterPro" id="IPR000566">
    <property type="entry name" value="Lipocln_cytosolic_FA-bd_dom"/>
</dbReference>
<dbReference type="InterPro" id="IPR002971">
    <property type="entry name" value="Maj_urinary"/>
</dbReference>
<dbReference type="PANTHER" id="PTHR11430">
    <property type="entry name" value="LIPOCALIN"/>
    <property type="match status" value="1"/>
</dbReference>
<dbReference type="PANTHER" id="PTHR11430:SF76">
    <property type="entry name" value="MAJOR URINARY PROTEIN 1-RELATED"/>
    <property type="match status" value="1"/>
</dbReference>
<dbReference type="Pfam" id="PF00061">
    <property type="entry name" value="Lipocalin"/>
    <property type="match status" value="1"/>
</dbReference>
<dbReference type="PRINTS" id="PR00179">
    <property type="entry name" value="LIPOCALIN"/>
</dbReference>
<dbReference type="PRINTS" id="PR01221">
    <property type="entry name" value="MAJORURINARY"/>
</dbReference>
<dbReference type="SUPFAM" id="SSF50814">
    <property type="entry name" value="Lipocalins"/>
    <property type="match status" value="1"/>
</dbReference>
<dbReference type="PROSITE" id="PS00213">
    <property type="entry name" value="LIPOCALIN"/>
    <property type="match status" value="1"/>
</dbReference>
<feature type="signal peptide" evidence="2 3">
    <location>
        <begin position="1"/>
        <end position="19"/>
    </location>
</feature>
<feature type="chain" id="PRO_0000017925" description="Major urinary protein">
    <location>
        <begin position="20"/>
        <end position="181"/>
    </location>
</feature>
<feature type="chain" id="PRO_0000017926" description="15.5 kDa fatty acid-binding protein">
    <location>
        <begin position="29"/>
        <end position="179"/>
    </location>
</feature>
<feature type="glycosylation site" description="N-linked (GlcNAc...) asparagine" evidence="4">
    <location>
        <position position="54"/>
    </location>
</feature>
<feature type="disulfide bond" evidence="1">
    <location>
        <begin position="83"/>
        <end position="176"/>
    </location>
</feature>
<feature type="sequence conflict" description="In Ref. 5; AAA41198." evidence="4" ref="5">
    <original>R</original>
    <variation>S</variation>
    <location>
        <position position="26"/>
    </location>
</feature>
<feature type="sequence conflict" description="In Ref. 7; CAA24531." evidence="4" ref="7">
    <original>G</original>
    <variation>D</variation>
    <location>
        <position position="55"/>
    </location>
</feature>
<feature type="turn" evidence="5">
    <location>
        <begin position="24"/>
        <end position="27"/>
    </location>
</feature>
<feature type="helix" evidence="5">
    <location>
        <begin position="31"/>
        <end position="34"/>
    </location>
</feature>
<feature type="strand" evidence="5">
    <location>
        <begin position="39"/>
        <end position="44"/>
    </location>
</feature>
<feature type="helix" evidence="5">
    <location>
        <begin position="48"/>
        <end position="50"/>
    </location>
</feature>
<feature type="strand" evidence="5">
    <location>
        <begin position="60"/>
        <end position="67"/>
    </location>
</feature>
<feature type="strand" evidence="5">
    <location>
        <begin position="70"/>
        <end position="81"/>
    </location>
</feature>
<feature type="strand" evidence="5">
    <location>
        <begin position="83"/>
        <end position="92"/>
    </location>
</feature>
<feature type="strand" evidence="5">
    <location>
        <begin position="99"/>
        <end position="114"/>
    </location>
</feature>
<feature type="strand" evidence="5">
    <location>
        <begin position="116"/>
        <end position="128"/>
    </location>
</feature>
<feature type="strand" evidence="5">
    <location>
        <begin position="131"/>
        <end position="144"/>
    </location>
</feature>
<feature type="helix" evidence="5">
    <location>
        <begin position="147"/>
        <end position="158"/>
    </location>
</feature>
<feature type="turn" evidence="5">
    <location>
        <begin position="159"/>
        <end position="161"/>
    </location>
</feature>
<feature type="helix" evidence="5">
    <location>
        <begin position="164"/>
        <end position="166"/>
    </location>
</feature>
<feature type="strand" evidence="5">
    <location>
        <begin position="167"/>
        <end position="169"/>
    </location>
</feature>
<feature type="helix" evidence="5">
    <location>
        <begin position="170"/>
        <end position="172"/>
    </location>
</feature>
<name>MUP_RAT</name>
<keyword id="KW-0002">3D-structure</keyword>
<keyword id="KW-0020">Allergen</keyword>
<keyword id="KW-0085">Behavior</keyword>
<keyword id="KW-0963">Cytoplasm</keyword>
<keyword id="KW-0903">Direct protein sequencing</keyword>
<keyword id="KW-1015">Disulfide bond</keyword>
<keyword id="KW-0325">Glycoprotein</keyword>
<keyword id="KW-0590">Pheromone-binding</keyword>
<keyword id="KW-1185">Reference proteome</keyword>
<keyword id="KW-0964">Secreted</keyword>
<keyword id="KW-0732">Signal</keyword>
<keyword id="KW-0813">Transport</keyword>
<accession>P02761</accession>
<accession>Q54AE7</accession>
<protein>
    <recommendedName>
        <fullName>Major urinary protein</fullName>
        <shortName>MUP</shortName>
    </recommendedName>
    <alternativeName>
        <fullName>Allergen Rat n I</fullName>
    </alternativeName>
    <alternativeName>
        <fullName>Alpha(2)-euglobulin</fullName>
    </alternativeName>
    <alternativeName>
        <fullName>Alpha-2u-globulin</fullName>
    </alternativeName>
    <alternativeName>
        <fullName>alpha-2u globulin PGCL1</fullName>
    </alternativeName>
    <allergenName>Rat n 1</allergenName>
    <component>
        <recommendedName>
            <fullName>15.5 kDa fatty acid-binding protein</fullName>
            <shortName>15.5 kDa FABP</shortName>
        </recommendedName>
    </component>
</protein>